<comment type="function">
    <text evidence="1">Probably part of the PhnSTUV complex (TC 3.A.1.11.5) involved in 2-aminoethylphosphonate import.</text>
</comment>
<comment type="subcellular location">
    <subcellularLocation>
        <location evidence="3">Periplasm</location>
    </subcellularLocation>
</comment>
<comment type="similarity">
    <text evidence="3">Belongs to the bacterial solute-binding protein 1 family.</text>
</comment>
<accession>Q8Z8W7</accession>
<accession>Q7C880</accession>
<sequence>MKLSRLALLSVFALASAPSWAESVVTVYSIDGLHDGDNSWYQVQFDAFTKATGITIRYVEGGGGVVVERLAKERTNPQADVLVTAPPFIQRAAAEKLLANFNTDAASAIPDANNLYSPLVKNYLSFIYNSKLLKTAPASWQDLLDGKFKNKLQYSTPGQAADGTAVMLQAFHSFGSKDASFAYLGKLQANNVGPSASTGKLTALVNKGEIYVANGDLQMNLAQMERNPNVKIFWPANDKGERSALAIPYVIGLVQGAPQSENGKKLINFLLSKEAQTRVSELSWGMPVRSDVTPSDEHYKAATAALEGVQSWQPNWDDVAVSLSADISRWHKVTESE</sequence>
<reference key="1">
    <citation type="journal article" date="2001" name="Nature">
        <title>Complete genome sequence of a multiple drug resistant Salmonella enterica serovar Typhi CT18.</title>
        <authorList>
            <person name="Parkhill J."/>
            <person name="Dougan G."/>
            <person name="James K.D."/>
            <person name="Thomson N.R."/>
            <person name="Pickard D."/>
            <person name="Wain J."/>
            <person name="Churcher C.M."/>
            <person name="Mungall K.L."/>
            <person name="Bentley S.D."/>
            <person name="Holden M.T.G."/>
            <person name="Sebaihia M."/>
            <person name="Baker S."/>
            <person name="Basham D."/>
            <person name="Brooks K."/>
            <person name="Chillingworth T."/>
            <person name="Connerton P."/>
            <person name="Cronin A."/>
            <person name="Davis P."/>
            <person name="Davies R.M."/>
            <person name="Dowd L."/>
            <person name="White N."/>
            <person name="Farrar J."/>
            <person name="Feltwell T."/>
            <person name="Hamlin N."/>
            <person name="Haque A."/>
            <person name="Hien T.T."/>
            <person name="Holroyd S."/>
            <person name="Jagels K."/>
            <person name="Krogh A."/>
            <person name="Larsen T.S."/>
            <person name="Leather S."/>
            <person name="Moule S."/>
            <person name="O'Gaora P."/>
            <person name="Parry C."/>
            <person name="Quail M.A."/>
            <person name="Rutherford K.M."/>
            <person name="Simmonds M."/>
            <person name="Skelton J."/>
            <person name="Stevens K."/>
            <person name="Whitehead S."/>
            <person name="Barrell B.G."/>
        </authorList>
    </citation>
    <scope>NUCLEOTIDE SEQUENCE [LARGE SCALE GENOMIC DNA]</scope>
    <source>
        <strain>CT18</strain>
    </source>
</reference>
<reference key="2">
    <citation type="journal article" date="2003" name="J. Bacteriol.">
        <title>Comparative genomics of Salmonella enterica serovar Typhi strains Ty2 and CT18.</title>
        <authorList>
            <person name="Deng W."/>
            <person name="Liou S.-R."/>
            <person name="Plunkett G. III"/>
            <person name="Mayhew G.F."/>
            <person name="Rose D.J."/>
            <person name="Burland V."/>
            <person name="Kodoyianni V."/>
            <person name="Schwartz D.C."/>
            <person name="Blattner F.R."/>
        </authorList>
    </citation>
    <scope>NUCLEOTIDE SEQUENCE [LARGE SCALE GENOMIC DNA]</scope>
    <source>
        <strain>ATCC 700931 / Ty2</strain>
    </source>
</reference>
<keyword id="KW-0574">Periplasm</keyword>
<keyword id="KW-0732">Signal</keyword>
<keyword id="KW-0813">Transport</keyword>
<feature type="signal peptide" evidence="2">
    <location>
        <begin position="1"/>
        <end position="21"/>
    </location>
</feature>
<feature type="chain" id="PRO_0000287399" description="Putative 2-aminoethylphosphonate-binding periplasmic protein">
    <location>
        <begin position="22"/>
        <end position="337"/>
    </location>
</feature>
<proteinExistence type="inferred from homology"/>
<dbReference type="EMBL" id="AL513382">
    <property type="protein sequence ID" value="CAD08885.1"/>
    <property type="molecule type" value="Genomic_DNA"/>
</dbReference>
<dbReference type="EMBL" id="AE014613">
    <property type="protein sequence ID" value="AAO70024.1"/>
    <property type="molecule type" value="Genomic_DNA"/>
</dbReference>
<dbReference type="RefSeq" id="NP_455023.1">
    <property type="nucleotide sequence ID" value="NC_003198.1"/>
</dbReference>
<dbReference type="RefSeq" id="WP_000778002.1">
    <property type="nucleotide sequence ID" value="NZ_WSUR01000026.1"/>
</dbReference>
<dbReference type="SMR" id="Q8Z8W7"/>
<dbReference type="STRING" id="220341.gene:17584490"/>
<dbReference type="KEGG" id="stt:t2434"/>
<dbReference type="KEGG" id="sty:STY0468"/>
<dbReference type="PATRIC" id="fig|220341.7.peg.469"/>
<dbReference type="eggNOG" id="COG1840">
    <property type="taxonomic scope" value="Bacteria"/>
</dbReference>
<dbReference type="HOGENOM" id="CLU_026974_3_2_6"/>
<dbReference type="OMA" id="WHKVTDS"/>
<dbReference type="OrthoDB" id="305758at2"/>
<dbReference type="Proteomes" id="UP000000541">
    <property type="component" value="Chromosome"/>
</dbReference>
<dbReference type="Proteomes" id="UP000002670">
    <property type="component" value="Chromosome"/>
</dbReference>
<dbReference type="GO" id="GO:0030288">
    <property type="term" value="C:outer membrane-bounded periplasmic space"/>
    <property type="evidence" value="ECO:0007669"/>
    <property type="project" value="TreeGrafter"/>
</dbReference>
<dbReference type="GO" id="GO:0030975">
    <property type="term" value="F:thiamine binding"/>
    <property type="evidence" value="ECO:0007669"/>
    <property type="project" value="TreeGrafter"/>
</dbReference>
<dbReference type="GO" id="GO:0030976">
    <property type="term" value="F:thiamine pyrophosphate binding"/>
    <property type="evidence" value="ECO:0007669"/>
    <property type="project" value="TreeGrafter"/>
</dbReference>
<dbReference type="GO" id="GO:0015888">
    <property type="term" value="P:thiamine transport"/>
    <property type="evidence" value="ECO:0007669"/>
    <property type="project" value="TreeGrafter"/>
</dbReference>
<dbReference type="Gene3D" id="3.40.190.10">
    <property type="entry name" value="Periplasmic binding protein-like II"/>
    <property type="match status" value="2"/>
</dbReference>
<dbReference type="InterPro" id="IPR017637">
    <property type="entry name" value="AminoethylPonate_ABC-bd"/>
</dbReference>
<dbReference type="InterPro" id="IPR006059">
    <property type="entry name" value="SBP"/>
</dbReference>
<dbReference type="NCBIfam" id="TIGR03227">
    <property type="entry name" value="PhnS"/>
    <property type="match status" value="1"/>
</dbReference>
<dbReference type="NCBIfam" id="NF011620">
    <property type="entry name" value="PRK15046.1"/>
    <property type="match status" value="1"/>
</dbReference>
<dbReference type="PANTHER" id="PTHR30006:SF3">
    <property type="entry name" value="THIAMINE-BINDING PERIPLASMIC PROTEIN"/>
    <property type="match status" value="1"/>
</dbReference>
<dbReference type="PANTHER" id="PTHR30006">
    <property type="entry name" value="THIAMINE-BINDING PERIPLASMIC PROTEIN-RELATED"/>
    <property type="match status" value="1"/>
</dbReference>
<dbReference type="Pfam" id="PF01547">
    <property type="entry name" value="SBP_bac_1"/>
    <property type="match status" value="1"/>
</dbReference>
<dbReference type="SUPFAM" id="SSF53850">
    <property type="entry name" value="Periplasmic binding protein-like II"/>
    <property type="match status" value="1"/>
</dbReference>
<gene>
    <name type="primary">phnS</name>
    <name type="ordered locus">STY0468</name>
    <name type="ordered locus">t2434</name>
</gene>
<evidence type="ECO:0000250" key="1"/>
<evidence type="ECO:0000255" key="2"/>
<evidence type="ECO:0000305" key="3"/>
<name>PHNS_SALTI</name>
<protein>
    <recommendedName>
        <fullName>Putative 2-aminoethylphosphonate-binding periplasmic protein</fullName>
    </recommendedName>
</protein>
<organism>
    <name type="scientific">Salmonella typhi</name>
    <dbReference type="NCBI Taxonomy" id="90370"/>
    <lineage>
        <taxon>Bacteria</taxon>
        <taxon>Pseudomonadati</taxon>
        <taxon>Pseudomonadota</taxon>
        <taxon>Gammaproteobacteria</taxon>
        <taxon>Enterobacterales</taxon>
        <taxon>Enterobacteriaceae</taxon>
        <taxon>Salmonella</taxon>
    </lineage>
</organism>